<sequence>MSSQEKLLKTVIRPHVSDKTYGLSDANSTIVFEVARFANKQDVKNAVEKLFEVKVESVNILNVKGKARRFGRVEGRTKAWKKAYVKLAEGHDINFVGAE</sequence>
<comment type="function">
    <text evidence="1">One of the early assembly proteins it binds 23S rRNA. One of the proteins that surrounds the polypeptide exit tunnel on the outside of the ribosome. Forms the main docking site for trigger factor binding to the ribosome.</text>
</comment>
<comment type="subunit">
    <text evidence="1">Part of the 50S ribosomal subunit. Contacts protein L29, and trigger factor when it is bound to the ribosome.</text>
</comment>
<comment type="similarity">
    <text evidence="1">Belongs to the universal ribosomal protein uL23 family.</text>
</comment>
<feature type="chain" id="PRO_1000068080" description="Large ribosomal subunit protein uL23">
    <location>
        <begin position="1"/>
        <end position="99"/>
    </location>
</feature>
<keyword id="KW-0687">Ribonucleoprotein</keyword>
<keyword id="KW-0689">Ribosomal protein</keyword>
<keyword id="KW-0694">RNA-binding</keyword>
<keyword id="KW-0699">rRNA-binding</keyword>
<accession>A4IZT2</accession>
<proteinExistence type="inferred from homology"/>
<gene>
    <name evidence="1" type="primary">rplW</name>
    <name type="ordered locus">FTW_1755</name>
</gene>
<reference key="1">
    <citation type="journal article" date="2007" name="PLoS ONE">
        <title>Complete genomic characterization of a pathogenic A.II strain of Francisella tularensis subspecies tularensis.</title>
        <authorList>
            <person name="Beckstrom-Sternberg S.M."/>
            <person name="Auerbach R.K."/>
            <person name="Godbole S."/>
            <person name="Pearson J.V."/>
            <person name="Beckstrom-Sternberg J.S."/>
            <person name="Deng Z."/>
            <person name="Munk C."/>
            <person name="Kubota K."/>
            <person name="Zhou Y."/>
            <person name="Bruce D."/>
            <person name="Noronha J."/>
            <person name="Scheuermann R.H."/>
            <person name="Wang A."/>
            <person name="Wei X."/>
            <person name="Wang J."/>
            <person name="Hao J."/>
            <person name="Wagner D.M."/>
            <person name="Brettin T.S."/>
            <person name="Brown N."/>
            <person name="Gilna P."/>
            <person name="Keim P.S."/>
        </authorList>
    </citation>
    <scope>NUCLEOTIDE SEQUENCE [LARGE SCALE GENOMIC DNA]</scope>
    <source>
        <strain>WY96-3418</strain>
    </source>
</reference>
<organism>
    <name type="scientific">Francisella tularensis subsp. tularensis (strain WY96-3418)</name>
    <dbReference type="NCBI Taxonomy" id="418136"/>
    <lineage>
        <taxon>Bacteria</taxon>
        <taxon>Pseudomonadati</taxon>
        <taxon>Pseudomonadota</taxon>
        <taxon>Gammaproteobacteria</taxon>
        <taxon>Thiotrichales</taxon>
        <taxon>Francisellaceae</taxon>
        <taxon>Francisella</taxon>
    </lineage>
</organism>
<name>RL23_FRATW</name>
<dbReference type="EMBL" id="CP000608">
    <property type="protein sequence ID" value="ABO47431.1"/>
    <property type="molecule type" value="Genomic_DNA"/>
</dbReference>
<dbReference type="RefSeq" id="WP_003027200.1">
    <property type="nucleotide sequence ID" value="NC_009257.1"/>
</dbReference>
<dbReference type="SMR" id="A4IZT2"/>
<dbReference type="GeneID" id="75264259"/>
<dbReference type="KEGG" id="ftw:FTW_1755"/>
<dbReference type="HOGENOM" id="CLU_037562_3_1_6"/>
<dbReference type="GO" id="GO:1990904">
    <property type="term" value="C:ribonucleoprotein complex"/>
    <property type="evidence" value="ECO:0007669"/>
    <property type="project" value="UniProtKB-KW"/>
</dbReference>
<dbReference type="GO" id="GO:0005840">
    <property type="term" value="C:ribosome"/>
    <property type="evidence" value="ECO:0007669"/>
    <property type="project" value="UniProtKB-KW"/>
</dbReference>
<dbReference type="GO" id="GO:0019843">
    <property type="term" value="F:rRNA binding"/>
    <property type="evidence" value="ECO:0007669"/>
    <property type="project" value="UniProtKB-UniRule"/>
</dbReference>
<dbReference type="GO" id="GO:0003735">
    <property type="term" value="F:structural constituent of ribosome"/>
    <property type="evidence" value="ECO:0007669"/>
    <property type="project" value="InterPro"/>
</dbReference>
<dbReference type="GO" id="GO:0006412">
    <property type="term" value="P:translation"/>
    <property type="evidence" value="ECO:0007669"/>
    <property type="project" value="UniProtKB-UniRule"/>
</dbReference>
<dbReference type="FunFam" id="3.30.70.330:FF:000001">
    <property type="entry name" value="50S ribosomal protein L23"/>
    <property type="match status" value="1"/>
</dbReference>
<dbReference type="Gene3D" id="3.30.70.330">
    <property type="match status" value="1"/>
</dbReference>
<dbReference type="HAMAP" id="MF_01369_B">
    <property type="entry name" value="Ribosomal_uL23_B"/>
    <property type="match status" value="1"/>
</dbReference>
<dbReference type="InterPro" id="IPR012677">
    <property type="entry name" value="Nucleotide-bd_a/b_plait_sf"/>
</dbReference>
<dbReference type="InterPro" id="IPR013025">
    <property type="entry name" value="Ribosomal_uL23-like"/>
</dbReference>
<dbReference type="InterPro" id="IPR012678">
    <property type="entry name" value="Ribosomal_uL23/eL15/eS24_sf"/>
</dbReference>
<dbReference type="InterPro" id="IPR001014">
    <property type="entry name" value="Ribosomal_uL23_CS"/>
</dbReference>
<dbReference type="NCBIfam" id="NF004359">
    <property type="entry name" value="PRK05738.1-3"/>
    <property type="match status" value="1"/>
</dbReference>
<dbReference type="NCBIfam" id="NF004363">
    <property type="entry name" value="PRK05738.2-4"/>
    <property type="match status" value="1"/>
</dbReference>
<dbReference type="PANTHER" id="PTHR11620">
    <property type="entry name" value="60S RIBOSOMAL PROTEIN L23A"/>
    <property type="match status" value="1"/>
</dbReference>
<dbReference type="Pfam" id="PF00276">
    <property type="entry name" value="Ribosomal_L23"/>
    <property type="match status" value="1"/>
</dbReference>
<dbReference type="SUPFAM" id="SSF54189">
    <property type="entry name" value="Ribosomal proteins S24e, L23 and L15e"/>
    <property type="match status" value="1"/>
</dbReference>
<dbReference type="PROSITE" id="PS00050">
    <property type="entry name" value="RIBOSOMAL_L23"/>
    <property type="match status" value="1"/>
</dbReference>
<evidence type="ECO:0000255" key="1">
    <source>
        <dbReference type="HAMAP-Rule" id="MF_01369"/>
    </source>
</evidence>
<evidence type="ECO:0000305" key="2"/>
<protein>
    <recommendedName>
        <fullName evidence="1">Large ribosomal subunit protein uL23</fullName>
    </recommendedName>
    <alternativeName>
        <fullName evidence="2">50S ribosomal protein L23</fullName>
    </alternativeName>
</protein>